<comment type="cofactor">
    <cofactor evidence="1">
        <name>heme</name>
        <dbReference type="ChEBI" id="CHEBI:30413"/>
    </cofactor>
</comment>
<comment type="subcellular location">
    <subcellularLocation>
        <location evidence="3">Membrane</location>
        <topology evidence="3">Single-pass membrane protein</topology>
    </subcellularLocation>
</comment>
<comment type="similarity">
    <text evidence="3">Belongs to the cytochrome P450 family.</text>
</comment>
<gene>
    <name type="primary">cyp554A1</name>
    <name type="ORF">DDB_G0284923</name>
</gene>
<name>C554A_DICDI</name>
<keyword id="KW-0349">Heme</keyword>
<keyword id="KW-0408">Iron</keyword>
<keyword id="KW-0472">Membrane</keyword>
<keyword id="KW-0479">Metal-binding</keyword>
<keyword id="KW-0503">Monooxygenase</keyword>
<keyword id="KW-0560">Oxidoreductase</keyword>
<keyword id="KW-1185">Reference proteome</keyword>
<keyword id="KW-0812">Transmembrane</keyword>
<keyword id="KW-1133">Transmembrane helix</keyword>
<sequence>MDLLLFIFFLILFYYSVKYYKADNQNSLSLSGPTPVPILGNIHQVGKDAHLTIPIISKKYHGIFRMWLGGTYYVVVSDYKLIREMYIENFENFKNRIATFKTMTGDDSRGIIGCNGDIWDSNKELIMKSYKKVLNKDMNDFILLKSKELFNFFEKNGIKNEEEEDDDDDGNKSIIINNTRFYFQSLTLTVMFKMIFNENKSFQLYSDSTEFKLIFKTILNLLNSLNVYNVIYDFLGIFQPILLKFTKILDKNSFLSKIATEKFNSRIKEIDFTSDDFKANDLLDSLIMTINEDENGLNEKQIENIKSICIDFLMAGTDTTGSTIEWIILKLVNNPEFQELIFQELKKLNKSEITANDKINTPFLNSFIKETNRLYPIAPLSLPRKSINEMIIGDNKYYIPANTNILMDVKGFSLDENNYKDPNEFKPDRFLNSKVSDTLNFGIGPRNCIGQTIAMNQIHIFLSNLILNYRMFSIDCLPLPENLILSVSVRPTEYSLKLIKRV</sequence>
<reference key="1">
    <citation type="journal article" date="2005" name="Nature">
        <title>The genome of the social amoeba Dictyostelium discoideum.</title>
        <authorList>
            <person name="Eichinger L."/>
            <person name="Pachebat J.A."/>
            <person name="Gloeckner G."/>
            <person name="Rajandream M.A."/>
            <person name="Sucgang R."/>
            <person name="Berriman M."/>
            <person name="Song J."/>
            <person name="Olsen R."/>
            <person name="Szafranski K."/>
            <person name="Xu Q."/>
            <person name="Tunggal B."/>
            <person name="Kummerfeld S."/>
            <person name="Madera M."/>
            <person name="Konfortov B.A."/>
            <person name="Rivero F."/>
            <person name="Bankier A.T."/>
            <person name="Lehmann R."/>
            <person name="Hamlin N."/>
            <person name="Davies R."/>
            <person name="Gaudet P."/>
            <person name="Fey P."/>
            <person name="Pilcher K."/>
            <person name="Chen G."/>
            <person name="Saunders D."/>
            <person name="Sodergren E.J."/>
            <person name="Davis P."/>
            <person name="Kerhornou A."/>
            <person name="Nie X."/>
            <person name="Hall N."/>
            <person name="Anjard C."/>
            <person name="Hemphill L."/>
            <person name="Bason N."/>
            <person name="Farbrother P."/>
            <person name="Desany B."/>
            <person name="Just E."/>
            <person name="Morio T."/>
            <person name="Rost R."/>
            <person name="Churcher C.M."/>
            <person name="Cooper J."/>
            <person name="Haydock S."/>
            <person name="van Driessche N."/>
            <person name="Cronin A."/>
            <person name="Goodhead I."/>
            <person name="Muzny D.M."/>
            <person name="Mourier T."/>
            <person name="Pain A."/>
            <person name="Lu M."/>
            <person name="Harper D."/>
            <person name="Lindsay R."/>
            <person name="Hauser H."/>
            <person name="James K.D."/>
            <person name="Quiles M."/>
            <person name="Madan Babu M."/>
            <person name="Saito T."/>
            <person name="Buchrieser C."/>
            <person name="Wardroper A."/>
            <person name="Felder M."/>
            <person name="Thangavelu M."/>
            <person name="Johnson D."/>
            <person name="Knights A."/>
            <person name="Loulseged H."/>
            <person name="Mungall K.L."/>
            <person name="Oliver K."/>
            <person name="Price C."/>
            <person name="Quail M.A."/>
            <person name="Urushihara H."/>
            <person name="Hernandez J."/>
            <person name="Rabbinowitsch E."/>
            <person name="Steffen D."/>
            <person name="Sanders M."/>
            <person name="Ma J."/>
            <person name="Kohara Y."/>
            <person name="Sharp S."/>
            <person name="Simmonds M.N."/>
            <person name="Spiegler S."/>
            <person name="Tivey A."/>
            <person name="Sugano S."/>
            <person name="White B."/>
            <person name="Walker D."/>
            <person name="Woodward J.R."/>
            <person name="Winckler T."/>
            <person name="Tanaka Y."/>
            <person name="Shaulsky G."/>
            <person name="Schleicher M."/>
            <person name="Weinstock G.M."/>
            <person name="Rosenthal A."/>
            <person name="Cox E.C."/>
            <person name="Chisholm R.L."/>
            <person name="Gibbs R.A."/>
            <person name="Loomis W.F."/>
            <person name="Platzer M."/>
            <person name="Kay R.R."/>
            <person name="Williams J.G."/>
            <person name="Dear P.H."/>
            <person name="Noegel A.A."/>
            <person name="Barrell B.G."/>
            <person name="Kuspa A."/>
        </authorList>
    </citation>
    <scope>NUCLEOTIDE SEQUENCE [LARGE SCALE GENOMIC DNA]</scope>
    <source>
        <strain>AX4</strain>
    </source>
</reference>
<accession>Q54NY3</accession>
<protein>
    <recommendedName>
        <fullName>Probable cytochrome P450 554A1</fullName>
        <ecNumber>1.14.-.-</ecNumber>
    </recommendedName>
</protein>
<organism>
    <name type="scientific">Dictyostelium discoideum</name>
    <name type="common">Social amoeba</name>
    <dbReference type="NCBI Taxonomy" id="44689"/>
    <lineage>
        <taxon>Eukaryota</taxon>
        <taxon>Amoebozoa</taxon>
        <taxon>Evosea</taxon>
        <taxon>Eumycetozoa</taxon>
        <taxon>Dictyostelia</taxon>
        <taxon>Dictyosteliales</taxon>
        <taxon>Dictyosteliaceae</taxon>
        <taxon>Dictyostelium</taxon>
    </lineage>
</organism>
<proteinExistence type="inferred from homology"/>
<dbReference type="EC" id="1.14.-.-"/>
<dbReference type="EMBL" id="AAFI02000073">
    <property type="protein sequence ID" value="EAL64925.1"/>
    <property type="molecule type" value="Genomic_DNA"/>
</dbReference>
<dbReference type="RefSeq" id="XP_639934.1">
    <property type="nucleotide sequence ID" value="XM_634842.1"/>
</dbReference>
<dbReference type="SMR" id="Q54NY3"/>
<dbReference type="FunCoup" id="Q54NY3">
    <property type="interactions" value="1"/>
</dbReference>
<dbReference type="STRING" id="44689.Q54NY3"/>
<dbReference type="GlyGen" id="Q54NY3">
    <property type="glycosylation" value="1 site"/>
</dbReference>
<dbReference type="PaxDb" id="44689-DDB0233047"/>
<dbReference type="EnsemblProtists" id="EAL64925">
    <property type="protein sequence ID" value="EAL64925"/>
    <property type="gene ID" value="DDB_G0284923"/>
</dbReference>
<dbReference type="GeneID" id="8624846"/>
<dbReference type="KEGG" id="ddi:DDB_G0284923"/>
<dbReference type="dictyBase" id="DDB_G0284923">
    <property type="gene designation" value="cyp554A1"/>
</dbReference>
<dbReference type="VEuPathDB" id="AmoebaDB:DDB_G0284923"/>
<dbReference type="eggNOG" id="KOG0156">
    <property type="taxonomic scope" value="Eukaryota"/>
</dbReference>
<dbReference type="HOGENOM" id="CLU_001570_4_0_1"/>
<dbReference type="InParanoid" id="Q54NY3"/>
<dbReference type="OMA" id="HTDPTQW"/>
<dbReference type="PhylomeDB" id="Q54NY3"/>
<dbReference type="Reactome" id="R-DDI-196791">
    <property type="pathway name" value="Vitamin D (calciferol) metabolism"/>
</dbReference>
<dbReference type="Reactome" id="R-DDI-211916">
    <property type="pathway name" value="Vitamins"/>
</dbReference>
<dbReference type="Reactome" id="R-DDI-211935">
    <property type="pathway name" value="Fatty acids"/>
</dbReference>
<dbReference type="Reactome" id="R-DDI-211945">
    <property type="pathway name" value="Phase I - Functionalization of compounds"/>
</dbReference>
<dbReference type="Reactome" id="R-DDI-211958">
    <property type="pathway name" value="Miscellaneous substrates"/>
</dbReference>
<dbReference type="Reactome" id="R-DDI-211981">
    <property type="pathway name" value="Xenobiotics"/>
</dbReference>
<dbReference type="Reactome" id="R-DDI-211999">
    <property type="pathway name" value="CYP2E1 reactions"/>
</dbReference>
<dbReference type="Reactome" id="R-DDI-2142670">
    <property type="pathway name" value="Synthesis of epoxy (EET) and dihydroxyeicosatrienoic acids (DHET)"/>
</dbReference>
<dbReference type="Reactome" id="R-DDI-2142816">
    <property type="pathway name" value="Synthesis of (16-20)-hydroxyeicosatetraenoic acids (HETE)"/>
</dbReference>
<dbReference type="Reactome" id="R-DDI-5423646">
    <property type="pathway name" value="Aflatoxin activation and detoxification"/>
</dbReference>
<dbReference type="Reactome" id="R-DDI-9027307">
    <property type="pathway name" value="Biosynthesis of maresin-like SPMs"/>
</dbReference>
<dbReference type="Reactome" id="R-DDI-9749641">
    <property type="pathway name" value="Aspirin ADME"/>
</dbReference>
<dbReference type="Reactome" id="R-DDI-9753281">
    <property type="pathway name" value="Paracetamol ADME"/>
</dbReference>
<dbReference type="PRO" id="PR:Q54NY3"/>
<dbReference type="Proteomes" id="UP000002195">
    <property type="component" value="Chromosome 4"/>
</dbReference>
<dbReference type="GO" id="GO:0016020">
    <property type="term" value="C:membrane"/>
    <property type="evidence" value="ECO:0007669"/>
    <property type="project" value="UniProtKB-SubCell"/>
</dbReference>
<dbReference type="GO" id="GO:0020037">
    <property type="term" value="F:heme binding"/>
    <property type="evidence" value="ECO:0007669"/>
    <property type="project" value="InterPro"/>
</dbReference>
<dbReference type="GO" id="GO:0005506">
    <property type="term" value="F:iron ion binding"/>
    <property type="evidence" value="ECO:0007669"/>
    <property type="project" value="InterPro"/>
</dbReference>
<dbReference type="GO" id="GO:0004497">
    <property type="term" value="F:monooxygenase activity"/>
    <property type="evidence" value="ECO:0007669"/>
    <property type="project" value="UniProtKB-KW"/>
</dbReference>
<dbReference type="GO" id="GO:0016705">
    <property type="term" value="F:oxidoreductase activity, acting on paired donors, with incorporation or reduction of molecular oxygen"/>
    <property type="evidence" value="ECO:0007669"/>
    <property type="project" value="InterPro"/>
</dbReference>
<dbReference type="CDD" id="cd20617">
    <property type="entry name" value="CYP1_2-like"/>
    <property type="match status" value="1"/>
</dbReference>
<dbReference type="FunFam" id="1.10.630.10:FF:000078">
    <property type="entry name" value="Probable cytochrome P450 515A1"/>
    <property type="match status" value="1"/>
</dbReference>
<dbReference type="Gene3D" id="1.10.630.10">
    <property type="entry name" value="Cytochrome P450"/>
    <property type="match status" value="1"/>
</dbReference>
<dbReference type="InterPro" id="IPR001128">
    <property type="entry name" value="Cyt_P450"/>
</dbReference>
<dbReference type="InterPro" id="IPR017972">
    <property type="entry name" value="Cyt_P450_CS"/>
</dbReference>
<dbReference type="InterPro" id="IPR002401">
    <property type="entry name" value="Cyt_P450_E_grp-I"/>
</dbReference>
<dbReference type="InterPro" id="IPR036396">
    <property type="entry name" value="Cyt_P450_sf"/>
</dbReference>
<dbReference type="PANTHER" id="PTHR24303:SF31">
    <property type="entry name" value="CYTOCHROME P450 307A1-RELATED"/>
    <property type="match status" value="1"/>
</dbReference>
<dbReference type="PANTHER" id="PTHR24303">
    <property type="entry name" value="HEME-BINDING MONOOXYGENASE FAMILY"/>
    <property type="match status" value="1"/>
</dbReference>
<dbReference type="Pfam" id="PF00067">
    <property type="entry name" value="p450"/>
    <property type="match status" value="1"/>
</dbReference>
<dbReference type="PRINTS" id="PR00463">
    <property type="entry name" value="EP450I"/>
</dbReference>
<dbReference type="PRINTS" id="PR00385">
    <property type="entry name" value="P450"/>
</dbReference>
<dbReference type="SUPFAM" id="SSF48264">
    <property type="entry name" value="Cytochrome P450"/>
    <property type="match status" value="1"/>
</dbReference>
<dbReference type="PROSITE" id="PS00086">
    <property type="entry name" value="CYTOCHROME_P450"/>
    <property type="match status" value="1"/>
</dbReference>
<feature type="chain" id="PRO_0000318843" description="Probable cytochrome P450 554A1">
    <location>
        <begin position="1"/>
        <end position="502"/>
    </location>
</feature>
<feature type="transmembrane region" description="Helical" evidence="2">
    <location>
        <begin position="3"/>
        <end position="20"/>
    </location>
</feature>
<feature type="binding site" description="axial binding residue" evidence="1">
    <location>
        <position position="448"/>
    </location>
    <ligand>
        <name>heme</name>
        <dbReference type="ChEBI" id="CHEBI:30413"/>
    </ligand>
    <ligandPart>
        <name>Fe</name>
        <dbReference type="ChEBI" id="CHEBI:18248"/>
    </ligandPart>
</feature>
<evidence type="ECO:0000250" key="1"/>
<evidence type="ECO:0000255" key="2"/>
<evidence type="ECO:0000305" key="3"/>